<evidence type="ECO:0000255" key="1">
    <source>
        <dbReference type="HAMAP-Rule" id="MF_00004"/>
    </source>
</evidence>
<dbReference type="EC" id="2.4.2.7" evidence="1"/>
<dbReference type="EMBL" id="AE017245">
    <property type="protein sequence ID" value="AAZ44094.1"/>
    <property type="molecule type" value="Genomic_DNA"/>
</dbReference>
<dbReference type="RefSeq" id="WP_011283823.1">
    <property type="nucleotide sequence ID" value="NC_007294.1"/>
</dbReference>
<dbReference type="SMR" id="Q4A577"/>
<dbReference type="STRING" id="262723.MS53_0687"/>
<dbReference type="KEGG" id="msy:MS53_0687"/>
<dbReference type="eggNOG" id="COG0503">
    <property type="taxonomic scope" value="Bacteria"/>
</dbReference>
<dbReference type="HOGENOM" id="CLU_063339_3_3_14"/>
<dbReference type="OrthoDB" id="9803963at2"/>
<dbReference type="UniPathway" id="UPA00588">
    <property type="reaction ID" value="UER00646"/>
</dbReference>
<dbReference type="Proteomes" id="UP000000549">
    <property type="component" value="Chromosome"/>
</dbReference>
<dbReference type="GO" id="GO:0005737">
    <property type="term" value="C:cytoplasm"/>
    <property type="evidence" value="ECO:0007669"/>
    <property type="project" value="UniProtKB-SubCell"/>
</dbReference>
<dbReference type="GO" id="GO:0002055">
    <property type="term" value="F:adenine binding"/>
    <property type="evidence" value="ECO:0007669"/>
    <property type="project" value="TreeGrafter"/>
</dbReference>
<dbReference type="GO" id="GO:0003999">
    <property type="term" value="F:adenine phosphoribosyltransferase activity"/>
    <property type="evidence" value="ECO:0007669"/>
    <property type="project" value="UniProtKB-UniRule"/>
</dbReference>
<dbReference type="GO" id="GO:0016208">
    <property type="term" value="F:AMP binding"/>
    <property type="evidence" value="ECO:0007669"/>
    <property type="project" value="TreeGrafter"/>
</dbReference>
<dbReference type="GO" id="GO:0006168">
    <property type="term" value="P:adenine salvage"/>
    <property type="evidence" value="ECO:0007669"/>
    <property type="project" value="InterPro"/>
</dbReference>
<dbReference type="GO" id="GO:0044209">
    <property type="term" value="P:AMP salvage"/>
    <property type="evidence" value="ECO:0007669"/>
    <property type="project" value="UniProtKB-UniRule"/>
</dbReference>
<dbReference type="GO" id="GO:0006166">
    <property type="term" value="P:purine ribonucleoside salvage"/>
    <property type="evidence" value="ECO:0007669"/>
    <property type="project" value="UniProtKB-KW"/>
</dbReference>
<dbReference type="CDD" id="cd06223">
    <property type="entry name" value="PRTases_typeI"/>
    <property type="match status" value="1"/>
</dbReference>
<dbReference type="FunFam" id="3.40.50.2020:FF:000004">
    <property type="entry name" value="Adenine phosphoribosyltransferase"/>
    <property type="match status" value="1"/>
</dbReference>
<dbReference type="Gene3D" id="3.40.50.2020">
    <property type="match status" value="1"/>
</dbReference>
<dbReference type="HAMAP" id="MF_00004">
    <property type="entry name" value="Aden_phosphoribosyltr"/>
    <property type="match status" value="1"/>
</dbReference>
<dbReference type="InterPro" id="IPR005764">
    <property type="entry name" value="Ade_phspho_trans"/>
</dbReference>
<dbReference type="InterPro" id="IPR000836">
    <property type="entry name" value="PRibTrfase_dom"/>
</dbReference>
<dbReference type="InterPro" id="IPR029057">
    <property type="entry name" value="PRTase-like"/>
</dbReference>
<dbReference type="InterPro" id="IPR050054">
    <property type="entry name" value="UPRTase/APRTase"/>
</dbReference>
<dbReference type="NCBIfam" id="NF002636">
    <property type="entry name" value="PRK02304.1-5"/>
    <property type="match status" value="1"/>
</dbReference>
<dbReference type="PANTHER" id="PTHR32315">
    <property type="entry name" value="ADENINE PHOSPHORIBOSYLTRANSFERASE"/>
    <property type="match status" value="1"/>
</dbReference>
<dbReference type="PANTHER" id="PTHR32315:SF3">
    <property type="entry name" value="ADENINE PHOSPHORIBOSYLTRANSFERASE"/>
    <property type="match status" value="1"/>
</dbReference>
<dbReference type="Pfam" id="PF00156">
    <property type="entry name" value="Pribosyltran"/>
    <property type="match status" value="1"/>
</dbReference>
<dbReference type="SUPFAM" id="SSF53271">
    <property type="entry name" value="PRTase-like"/>
    <property type="match status" value="1"/>
</dbReference>
<keyword id="KW-0963">Cytoplasm</keyword>
<keyword id="KW-0328">Glycosyltransferase</keyword>
<keyword id="KW-0660">Purine salvage</keyword>
<keyword id="KW-1185">Reference proteome</keyword>
<keyword id="KW-0808">Transferase</keyword>
<organism>
    <name type="scientific">Mycoplasmopsis synoviae (strain 53)</name>
    <name type="common">Mycoplasma synoviae</name>
    <dbReference type="NCBI Taxonomy" id="262723"/>
    <lineage>
        <taxon>Bacteria</taxon>
        <taxon>Bacillati</taxon>
        <taxon>Mycoplasmatota</taxon>
        <taxon>Mycoplasmoidales</taxon>
        <taxon>Metamycoplasmataceae</taxon>
        <taxon>Mycoplasmopsis</taxon>
    </lineage>
</organism>
<gene>
    <name evidence="1" type="primary">apt</name>
    <name type="ordered locus">MS53_0687</name>
</gene>
<accession>Q4A577</accession>
<protein>
    <recommendedName>
        <fullName evidence="1">Adenine phosphoribosyltransferase</fullName>
        <shortName evidence="1">APRT</shortName>
        <ecNumber evidence="1">2.4.2.7</ecNumber>
    </recommendedName>
</protein>
<feature type="chain" id="PRO_0000321372" description="Adenine phosphoribosyltransferase">
    <location>
        <begin position="1"/>
        <end position="169"/>
    </location>
</feature>
<proteinExistence type="inferred from homology"/>
<comment type="function">
    <text evidence="1">Catalyzes a salvage reaction resulting in the formation of AMP, that is energically less costly than de novo synthesis.</text>
</comment>
<comment type="catalytic activity">
    <reaction evidence="1">
        <text>AMP + diphosphate = 5-phospho-alpha-D-ribose 1-diphosphate + adenine</text>
        <dbReference type="Rhea" id="RHEA:16609"/>
        <dbReference type="ChEBI" id="CHEBI:16708"/>
        <dbReference type="ChEBI" id="CHEBI:33019"/>
        <dbReference type="ChEBI" id="CHEBI:58017"/>
        <dbReference type="ChEBI" id="CHEBI:456215"/>
        <dbReference type="EC" id="2.4.2.7"/>
    </reaction>
</comment>
<comment type="pathway">
    <text evidence="1">Purine metabolism; AMP biosynthesis via salvage pathway; AMP from adenine: step 1/1.</text>
</comment>
<comment type="subunit">
    <text evidence="1">Homodimer.</text>
</comment>
<comment type="subcellular location">
    <subcellularLocation>
        <location evidence="1">Cytoplasm</location>
    </subcellularLocation>
</comment>
<comment type="similarity">
    <text evidence="1">Belongs to the purine/pyrimidine phosphoribosyltransferase family.</text>
</comment>
<name>APT_MYCS5</name>
<reference key="1">
    <citation type="journal article" date="2005" name="J. Bacteriol.">
        <title>Swine and poultry pathogens: the complete genome sequences of two strains of Mycoplasma hyopneumoniae and a strain of Mycoplasma synoviae.</title>
        <authorList>
            <person name="Vasconcelos A.T.R."/>
            <person name="Ferreira H.B."/>
            <person name="Bizarro C.V."/>
            <person name="Bonatto S.L."/>
            <person name="Carvalho M.O."/>
            <person name="Pinto P.M."/>
            <person name="Almeida D.F."/>
            <person name="Almeida L.G.P."/>
            <person name="Almeida R."/>
            <person name="Alves-Junior L."/>
            <person name="Assuncao E.N."/>
            <person name="Azevedo V.A.C."/>
            <person name="Bogo M.R."/>
            <person name="Brigido M.M."/>
            <person name="Brocchi M."/>
            <person name="Burity H.A."/>
            <person name="Camargo A.A."/>
            <person name="Camargo S.S."/>
            <person name="Carepo M.S."/>
            <person name="Carraro D.M."/>
            <person name="de Mattos Cascardo J.C."/>
            <person name="Castro L.A."/>
            <person name="Cavalcanti G."/>
            <person name="Chemale G."/>
            <person name="Collevatti R.G."/>
            <person name="Cunha C.W."/>
            <person name="Dallagiovanna B."/>
            <person name="Dambros B.P."/>
            <person name="Dellagostin O.A."/>
            <person name="Falcao C."/>
            <person name="Fantinatti-Garboggini F."/>
            <person name="Felipe M.S.S."/>
            <person name="Fiorentin L."/>
            <person name="Franco G.R."/>
            <person name="Freitas N.S.A."/>
            <person name="Frias D."/>
            <person name="Grangeiro T.B."/>
            <person name="Grisard E.C."/>
            <person name="Guimaraes C.T."/>
            <person name="Hungria M."/>
            <person name="Jardim S.N."/>
            <person name="Krieger M.A."/>
            <person name="Laurino J.P."/>
            <person name="Lima L.F.A."/>
            <person name="Lopes M.I."/>
            <person name="Loreto E.L.S."/>
            <person name="Madeira H.M.F."/>
            <person name="Manfio G.P."/>
            <person name="Maranhao A.Q."/>
            <person name="Martinkovics C.T."/>
            <person name="Medeiros S.R.B."/>
            <person name="Moreira M.A.M."/>
            <person name="Neiva M."/>
            <person name="Ramalho-Neto C.E."/>
            <person name="Nicolas M.F."/>
            <person name="Oliveira S.C."/>
            <person name="Paixao R.F.C."/>
            <person name="Pedrosa F.O."/>
            <person name="Pena S.D.J."/>
            <person name="Pereira M."/>
            <person name="Pereira-Ferrari L."/>
            <person name="Piffer I."/>
            <person name="Pinto L.S."/>
            <person name="Potrich D.P."/>
            <person name="Salim A.C.M."/>
            <person name="Santos F.R."/>
            <person name="Schmitt R."/>
            <person name="Schneider M.P.C."/>
            <person name="Schrank A."/>
            <person name="Schrank I.S."/>
            <person name="Schuck A.F."/>
            <person name="Seuanez H.N."/>
            <person name="Silva D.W."/>
            <person name="Silva R."/>
            <person name="Silva S.C."/>
            <person name="Soares C.M.A."/>
            <person name="Souza K.R.L."/>
            <person name="Souza R.C."/>
            <person name="Staats C.C."/>
            <person name="Steffens M.B.R."/>
            <person name="Teixeira S.M.R."/>
            <person name="Urmenyi T.P."/>
            <person name="Vainstein M.H."/>
            <person name="Zuccherato L.W."/>
            <person name="Simpson A.J.G."/>
            <person name="Zaha A."/>
        </authorList>
    </citation>
    <scope>NUCLEOTIDE SEQUENCE [LARGE SCALE GENOMIC DNA]</scope>
    <source>
        <strain>53</strain>
    </source>
</reference>
<sequence length="169" mass="18848">MQLKDYVKDVLDFPKKGIVFKDISPLLADKDAFDLIIKEMAKYCQNSDYIVAADARGFIFGAAIAFHLKKPFVMVRKPKKMPGPSYSVSYELEYGHNVLELQEDLIKENASVSIVDDILATGGTLNAMIELLEKAKAKVNNIVVAIDLTKLSQDFKSSLKTPLDSVIKY</sequence>